<gene>
    <name type="primary">MT-CYB</name>
    <name type="synonym">COB</name>
    <name type="synonym">CYTB</name>
    <name type="synonym">MTCYB</name>
</gene>
<dbReference type="EMBL" id="AY513799">
    <property type="protein sequence ID" value="AAS82791.1"/>
    <property type="molecule type" value="Genomic_DNA"/>
</dbReference>
<dbReference type="EMBL" id="AY513800">
    <property type="protein sequence ID" value="AAS82792.1"/>
    <property type="molecule type" value="Genomic_DNA"/>
</dbReference>
<dbReference type="EMBL" id="AY513801">
    <property type="protein sequence ID" value="AAS82793.1"/>
    <property type="molecule type" value="Genomic_DNA"/>
</dbReference>
<dbReference type="EMBL" id="AY513802">
    <property type="protein sequence ID" value="AAS82794.1"/>
    <property type="molecule type" value="Genomic_DNA"/>
</dbReference>
<dbReference type="SMR" id="Q6JDT4"/>
<dbReference type="GO" id="GO:0005743">
    <property type="term" value="C:mitochondrial inner membrane"/>
    <property type="evidence" value="ECO:0007669"/>
    <property type="project" value="UniProtKB-SubCell"/>
</dbReference>
<dbReference type="GO" id="GO:0045275">
    <property type="term" value="C:respiratory chain complex III"/>
    <property type="evidence" value="ECO:0007669"/>
    <property type="project" value="InterPro"/>
</dbReference>
<dbReference type="GO" id="GO:0046872">
    <property type="term" value="F:metal ion binding"/>
    <property type="evidence" value="ECO:0007669"/>
    <property type="project" value="UniProtKB-KW"/>
</dbReference>
<dbReference type="GO" id="GO:0008121">
    <property type="term" value="F:ubiquinol-cytochrome-c reductase activity"/>
    <property type="evidence" value="ECO:0007669"/>
    <property type="project" value="InterPro"/>
</dbReference>
<dbReference type="GO" id="GO:0006122">
    <property type="term" value="P:mitochondrial electron transport, ubiquinol to cytochrome c"/>
    <property type="evidence" value="ECO:0007669"/>
    <property type="project" value="TreeGrafter"/>
</dbReference>
<dbReference type="CDD" id="cd00290">
    <property type="entry name" value="cytochrome_b_C"/>
    <property type="match status" value="1"/>
</dbReference>
<dbReference type="CDD" id="cd00284">
    <property type="entry name" value="Cytochrome_b_N"/>
    <property type="match status" value="1"/>
</dbReference>
<dbReference type="FunFam" id="1.20.810.10:FF:000002">
    <property type="entry name" value="Cytochrome b"/>
    <property type="match status" value="1"/>
</dbReference>
<dbReference type="Gene3D" id="1.20.810.10">
    <property type="entry name" value="Cytochrome Bc1 Complex, Chain C"/>
    <property type="match status" value="1"/>
</dbReference>
<dbReference type="InterPro" id="IPR005798">
    <property type="entry name" value="Cyt_b/b6_C"/>
</dbReference>
<dbReference type="InterPro" id="IPR036150">
    <property type="entry name" value="Cyt_b/b6_C_sf"/>
</dbReference>
<dbReference type="InterPro" id="IPR005797">
    <property type="entry name" value="Cyt_b/b6_N"/>
</dbReference>
<dbReference type="InterPro" id="IPR027387">
    <property type="entry name" value="Cytb/b6-like_sf"/>
</dbReference>
<dbReference type="InterPro" id="IPR030689">
    <property type="entry name" value="Cytochrome_b"/>
</dbReference>
<dbReference type="InterPro" id="IPR048260">
    <property type="entry name" value="Cytochrome_b_C_euk/bac"/>
</dbReference>
<dbReference type="InterPro" id="IPR048259">
    <property type="entry name" value="Cytochrome_b_N_euk/bac"/>
</dbReference>
<dbReference type="InterPro" id="IPR016174">
    <property type="entry name" value="Di-haem_cyt_TM"/>
</dbReference>
<dbReference type="PANTHER" id="PTHR19271">
    <property type="entry name" value="CYTOCHROME B"/>
    <property type="match status" value="1"/>
</dbReference>
<dbReference type="PANTHER" id="PTHR19271:SF16">
    <property type="entry name" value="CYTOCHROME B"/>
    <property type="match status" value="1"/>
</dbReference>
<dbReference type="Pfam" id="PF00032">
    <property type="entry name" value="Cytochrom_B_C"/>
    <property type="match status" value="1"/>
</dbReference>
<dbReference type="Pfam" id="PF00033">
    <property type="entry name" value="Cytochrome_B"/>
    <property type="match status" value="1"/>
</dbReference>
<dbReference type="PIRSF" id="PIRSF038885">
    <property type="entry name" value="COB"/>
    <property type="match status" value="1"/>
</dbReference>
<dbReference type="SUPFAM" id="SSF81648">
    <property type="entry name" value="a domain/subunit of cytochrome bc1 complex (Ubiquinol-cytochrome c reductase)"/>
    <property type="match status" value="1"/>
</dbReference>
<dbReference type="SUPFAM" id="SSF81342">
    <property type="entry name" value="Transmembrane di-heme cytochromes"/>
    <property type="match status" value="1"/>
</dbReference>
<dbReference type="PROSITE" id="PS51003">
    <property type="entry name" value="CYTB_CTER"/>
    <property type="match status" value="1"/>
</dbReference>
<dbReference type="PROSITE" id="PS51002">
    <property type="entry name" value="CYTB_NTER"/>
    <property type="match status" value="1"/>
</dbReference>
<proteinExistence type="inferred from homology"/>
<name>CYB_MICGE</name>
<protein>
    <recommendedName>
        <fullName>Cytochrome b</fullName>
    </recommendedName>
    <alternativeName>
        <fullName>Complex III subunit 3</fullName>
    </alternativeName>
    <alternativeName>
        <fullName>Complex III subunit III</fullName>
    </alternativeName>
    <alternativeName>
        <fullName>Cytochrome b-c1 complex subunit 3</fullName>
    </alternativeName>
    <alternativeName>
        <fullName>Ubiquinol-cytochrome-c reductase complex cytochrome b subunit</fullName>
    </alternativeName>
</protein>
<reference key="1">
    <citation type="journal article" date="2004" name="Mol. Phylogenet. Evol.">
        <title>Molecular phylogeny of the speciose vole genus Microtus (Arvicolinae, Rodentia) inferred from mitochondrial DNA sequences.</title>
        <authorList>
            <person name="Jaarola M."/>
            <person name="Martinkova N."/>
            <person name="Gunduz I."/>
            <person name="Brunhoff C."/>
            <person name="Zima J."/>
            <person name="Nadachowski A."/>
            <person name="Amori G."/>
            <person name="Bulatova N.S."/>
            <person name="Chondropoulos B."/>
            <person name="Fraguedakis-Tsolis S."/>
            <person name="Gonzalez-Esteban J."/>
            <person name="Lopez-Fuster M.J."/>
            <person name="Kandaurov A.S."/>
            <person name="Kefelioglu H."/>
            <person name="Mathias M.L."/>
            <person name="Villate I."/>
            <person name="Searle J.B."/>
        </authorList>
    </citation>
    <scope>NUCLEOTIDE SEQUENCE [GENOMIC DNA]</scope>
    <source>
        <strain>Isolate 1</strain>
        <strain>Isolate 2</strain>
        <strain>Isolate 3</strain>
        <strain>Isolate 4</strain>
    </source>
</reference>
<feature type="chain" id="PRO_0000255078" description="Cytochrome b">
    <location>
        <begin position="1"/>
        <end position="380"/>
    </location>
</feature>
<feature type="transmembrane region" description="Helical" evidence="2">
    <location>
        <begin position="33"/>
        <end position="53"/>
    </location>
</feature>
<feature type="transmembrane region" description="Helical" evidence="2">
    <location>
        <begin position="77"/>
        <end position="98"/>
    </location>
</feature>
<feature type="transmembrane region" description="Helical" evidence="2">
    <location>
        <begin position="113"/>
        <end position="133"/>
    </location>
</feature>
<feature type="transmembrane region" description="Helical" evidence="2">
    <location>
        <begin position="178"/>
        <end position="198"/>
    </location>
</feature>
<feature type="transmembrane region" description="Helical" evidence="2">
    <location>
        <begin position="226"/>
        <end position="246"/>
    </location>
</feature>
<feature type="transmembrane region" description="Helical" evidence="2">
    <location>
        <begin position="288"/>
        <end position="308"/>
    </location>
</feature>
<feature type="transmembrane region" description="Helical" evidence="2">
    <location>
        <begin position="320"/>
        <end position="340"/>
    </location>
</feature>
<feature type="transmembrane region" description="Helical" evidence="2">
    <location>
        <begin position="347"/>
        <end position="367"/>
    </location>
</feature>
<feature type="binding site" description="axial binding residue" evidence="2">
    <location>
        <position position="83"/>
    </location>
    <ligand>
        <name>heme b</name>
        <dbReference type="ChEBI" id="CHEBI:60344"/>
        <label>b562</label>
    </ligand>
    <ligandPart>
        <name>Fe</name>
        <dbReference type="ChEBI" id="CHEBI:18248"/>
    </ligandPart>
</feature>
<feature type="binding site" description="axial binding residue" evidence="2">
    <location>
        <position position="97"/>
    </location>
    <ligand>
        <name>heme b</name>
        <dbReference type="ChEBI" id="CHEBI:60344"/>
        <label>b566</label>
    </ligand>
    <ligandPart>
        <name>Fe</name>
        <dbReference type="ChEBI" id="CHEBI:18248"/>
    </ligandPart>
</feature>
<feature type="binding site" description="axial binding residue" evidence="2">
    <location>
        <position position="182"/>
    </location>
    <ligand>
        <name>heme b</name>
        <dbReference type="ChEBI" id="CHEBI:60344"/>
        <label>b562</label>
    </ligand>
    <ligandPart>
        <name>Fe</name>
        <dbReference type="ChEBI" id="CHEBI:18248"/>
    </ligandPart>
</feature>
<feature type="binding site" description="axial binding residue" evidence="2">
    <location>
        <position position="196"/>
    </location>
    <ligand>
        <name>heme b</name>
        <dbReference type="ChEBI" id="CHEBI:60344"/>
        <label>b566</label>
    </ligand>
    <ligandPart>
        <name>Fe</name>
        <dbReference type="ChEBI" id="CHEBI:18248"/>
    </ligandPart>
</feature>
<feature type="binding site" evidence="2">
    <location>
        <position position="201"/>
    </location>
    <ligand>
        <name>a ubiquinone</name>
        <dbReference type="ChEBI" id="CHEBI:16389"/>
    </ligand>
</feature>
<feature type="sequence variant" description="In strain: Isolate 1.">
    <original>T</original>
    <variation>A</variation>
    <location>
        <position position="176"/>
    </location>
</feature>
<feature type="sequence variant" description="In strain: Isolate 3.">
    <original>F</original>
    <variation>L</variation>
    <location>
        <position position="303"/>
    </location>
</feature>
<organism>
    <name type="scientific">Microtus gerbei</name>
    <name type="common">Pyrenean pine vole</name>
    <name type="synonym">Microtus pyrenaicus</name>
    <dbReference type="NCBI Taxonomy" id="269654"/>
    <lineage>
        <taxon>Eukaryota</taxon>
        <taxon>Metazoa</taxon>
        <taxon>Chordata</taxon>
        <taxon>Craniata</taxon>
        <taxon>Vertebrata</taxon>
        <taxon>Euteleostomi</taxon>
        <taxon>Mammalia</taxon>
        <taxon>Eutheria</taxon>
        <taxon>Euarchontoglires</taxon>
        <taxon>Glires</taxon>
        <taxon>Rodentia</taxon>
        <taxon>Myomorpha</taxon>
        <taxon>Muroidea</taxon>
        <taxon>Cricetidae</taxon>
        <taxon>Arvicolinae</taxon>
        <taxon>Microtus</taxon>
    </lineage>
</organism>
<comment type="function">
    <text evidence="2">Component of the ubiquinol-cytochrome c reductase complex (complex III or cytochrome b-c1 complex) that is part of the mitochondrial respiratory chain. The b-c1 complex mediates electron transfer from ubiquinol to cytochrome c. Contributes to the generation of a proton gradient across the mitochondrial membrane that is then used for ATP synthesis.</text>
</comment>
<comment type="cofactor">
    <cofactor evidence="2">
        <name>heme b</name>
        <dbReference type="ChEBI" id="CHEBI:60344"/>
    </cofactor>
    <text evidence="2">Binds 2 heme b groups non-covalently.</text>
</comment>
<comment type="subunit">
    <text evidence="2">The cytochrome bc1 complex contains 11 subunits: 3 respiratory subunits (MT-CYB, CYC1 and UQCRFS1), 2 core proteins (UQCRC1 and UQCRC2) and 6 low-molecular weight proteins (UQCRH/QCR6, UQCRB/QCR7, UQCRQ/QCR8, UQCR10/QCR9, UQCR11/QCR10 and a cleavage product of UQCRFS1). This cytochrome bc1 complex then forms a dimer.</text>
</comment>
<comment type="subcellular location">
    <subcellularLocation>
        <location evidence="2">Mitochondrion inner membrane</location>
        <topology evidence="2">Multi-pass membrane protein</topology>
    </subcellularLocation>
</comment>
<comment type="miscellaneous">
    <text evidence="1">Heme 1 (or BL or b562) is low-potential and absorbs at about 562 nm, and heme 2 (or BH or b566) is high-potential and absorbs at about 566 nm.</text>
</comment>
<comment type="similarity">
    <text evidence="3 4">Belongs to the cytochrome b family.</text>
</comment>
<comment type="caution">
    <text evidence="2">The full-length protein contains only eight transmembrane helices, not nine as predicted by bioinformatics tools.</text>
</comment>
<geneLocation type="mitochondrion"/>
<sequence length="380" mass="42805">MTIIRKKHPLIKIINHSFIDLPAPSNISSWWNFGSLLGLCLAIQILTGLFLAMHYTSDTATAFSSVAHICRDVNYGWLIRYMHANGASMFFICLFLHVGRGVYYGSYNMIETWNMGIILLFAVMATAFMGYVLPWGQMSFWGATVITNLLSAIPYIGTTLVEWIWGGFSVDKATLTRFFAFHFILPFIITALVLVHLLFLHETGSNNPTGLNSDADKIPFHPYYTVKDFLGVLVLLMAFMILTLFFPDILGDPDNYTPANPLNTPPHIKPEWYFLFAYAILRSIPNKLGGVLALILSILILAFMPLLHTSKQRALTFRPITQTMYWVLVADLLVLTWIGGQPVEYPFIIIGQTASIAYFTIIMILMPIAGMIENNILDLN</sequence>
<accession>Q6JDT4</accession>
<accession>Q6JDT5</accession>
<accession>Q6JDT7</accession>
<evidence type="ECO:0000250" key="1"/>
<evidence type="ECO:0000250" key="2">
    <source>
        <dbReference type="UniProtKB" id="P00157"/>
    </source>
</evidence>
<evidence type="ECO:0000255" key="3">
    <source>
        <dbReference type="PROSITE-ProRule" id="PRU00967"/>
    </source>
</evidence>
<evidence type="ECO:0000255" key="4">
    <source>
        <dbReference type="PROSITE-ProRule" id="PRU00968"/>
    </source>
</evidence>
<keyword id="KW-0249">Electron transport</keyword>
<keyword id="KW-0349">Heme</keyword>
<keyword id="KW-0408">Iron</keyword>
<keyword id="KW-0472">Membrane</keyword>
<keyword id="KW-0479">Metal-binding</keyword>
<keyword id="KW-0496">Mitochondrion</keyword>
<keyword id="KW-0999">Mitochondrion inner membrane</keyword>
<keyword id="KW-0679">Respiratory chain</keyword>
<keyword id="KW-0812">Transmembrane</keyword>
<keyword id="KW-1133">Transmembrane helix</keyword>
<keyword id="KW-0813">Transport</keyword>
<keyword id="KW-0830">Ubiquinone</keyword>